<reference key="1">
    <citation type="journal article" date="2009" name="PLoS Biol.">
        <title>Lineage-specific biology revealed by a finished genome assembly of the mouse.</title>
        <authorList>
            <person name="Church D.M."/>
            <person name="Goodstadt L."/>
            <person name="Hillier L.W."/>
            <person name="Zody M.C."/>
            <person name="Goldstein S."/>
            <person name="She X."/>
            <person name="Bult C.J."/>
            <person name="Agarwala R."/>
            <person name="Cherry J.L."/>
            <person name="DiCuccio M."/>
            <person name="Hlavina W."/>
            <person name="Kapustin Y."/>
            <person name="Meric P."/>
            <person name="Maglott D."/>
            <person name="Birtle Z."/>
            <person name="Marques A.C."/>
            <person name="Graves T."/>
            <person name="Zhou S."/>
            <person name="Teague B."/>
            <person name="Potamousis K."/>
            <person name="Churas C."/>
            <person name="Place M."/>
            <person name="Herschleb J."/>
            <person name="Runnheim R."/>
            <person name="Forrest D."/>
            <person name="Amos-Landgraf J."/>
            <person name="Schwartz D.C."/>
            <person name="Cheng Z."/>
            <person name="Lindblad-Toh K."/>
            <person name="Eichler E.E."/>
            <person name="Ponting C.P."/>
        </authorList>
    </citation>
    <scope>NUCLEOTIDE SEQUENCE [LARGE SCALE GENOMIC DNA]</scope>
    <source>
        <strain>C57BL/6J</strain>
    </source>
</reference>
<reference key="2">
    <citation type="journal article" date="2001" name="Gene">
        <title>Characterization and comparative analysis of the EGLN gene family.</title>
        <authorList>
            <person name="Taylor M.S."/>
        </authorList>
    </citation>
    <scope>NUCLEOTIDE SEQUENCE [MRNA] OF 34-400</scope>
</reference>
<reference key="3">
    <citation type="journal article" date="2002" name="Biochem. Cell Biol.">
        <title>Mammalian EGLN genes have distinct patterns of mRNA expression and regulation.</title>
        <authorList>
            <person name="Lieb M.E."/>
            <person name="Menzies K."/>
            <person name="Moschella M.C."/>
            <person name="Ni R."/>
            <person name="Taubman M.B."/>
        </authorList>
    </citation>
    <scope>NUCLEOTIDE SEQUENCE [MRNA] OF 205-400</scope>
    <scope>TISSUE SPECIFICITY</scope>
</reference>
<reference key="4">
    <citation type="journal article" date="2004" name="Genome Res.">
        <title>The status, quality, and expansion of the NIH full-length cDNA project: the Mammalian Gene Collection (MGC).</title>
        <authorList>
            <consortium name="The MGC Project Team"/>
        </authorList>
    </citation>
    <scope>NUCLEOTIDE SEQUENCE [LARGE SCALE MRNA] OF 268-400</scope>
    <source>
        <tissue>Mammary gland</tissue>
    </source>
</reference>
<reference key="5">
    <citation type="journal article" date="1999" name="Gene Expr.">
        <title>SM-20 is a novel growth factor-responsive gene regulated during skeletal muscle development and differentiation.</title>
        <authorList>
            <person name="Moschella M.C."/>
            <person name="Menzies K."/>
            <person name="Tsao L."/>
            <person name="Lieb M.A."/>
            <person name="Kohtz J.D."/>
            <person name="Kohtz D.S."/>
            <person name="Taubman M.B."/>
        </authorList>
    </citation>
    <scope>INDUCTION</scope>
</reference>
<reference key="6">
    <citation type="journal article" date="2008" name="Blood">
        <title>Somatic inactivation of the PHD2 prolyl hydroxylase causes polycythemia and congestive heart failure.</title>
        <authorList>
            <person name="Minamishima Y.A."/>
            <person name="Moslehi J."/>
            <person name="Bardeesy N."/>
            <person name="Cullen D."/>
            <person name="Bronson R.T."/>
            <person name="Kaelin W.G. Jr."/>
        </authorList>
    </citation>
    <scope>DISRUPTION PHENOTYPE</scope>
    <scope>FUNCTION</scope>
</reference>
<reference key="7">
    <citation type="journal article" date="2008" name="Mol. Ther.">
        <title>Enhancement of angiogenesis through stabilization of hypoxia-inducible factor-1 by silencing prolyl hydroxylase domain-2 gene.</title>
        <authorList>
            <person name="Wu S."/>
            <person name="Nishiyama N."/>
            <person name="Kano M.R."/>
            <person name="Morishita Y."/>
            <person name="Miyazono K."/>
            <person name="Itaka K."/>
            <person name="Chung U.I."/>
            <person name="Kataoka K."/>
        </authorList>
    </citation>
    <scope>DISRUPTION PHENOTYPE</scope>
    <scope>FUNCTION</scope>
</reference>
<reference key="8">
    <citation type="journal article" date="2010" name="Cell">
        <title>A tissue-specific atlas of mouse protein phosphorylation and expression.</title>
        <authorList>
            <person name="Huttlin E.L."/>
            <person name="Jedrychowski M.P."/>
            <person name="Elias J.E."/>
            <person name="Goswami T."/>
            <person name="Rad R."/>
            <person name="Beausoleil S.A."/>
            <person name="Villen J."/>
            <person name="Haas W."/>
            <person name="Sowa M.E."/>
            <person name="Gygi S.P."/>
        </authorList>
    </citation>
    <scope>IDENTIFICATION BY MASS SPECTROMETRY [LARGE SCALE ANALYSIS]</scope>
    <source>
        <tissue>Brown adipose tissue</tissue>
        <tissue>Heart</tissue>
        <tissue>Lung</tissue>
        <tissue>Testis</tissue>
    </source>
</reference>
<reference key="9">
    <citation type="journal article" date="2011" name="Am. J. Pathol.">
        <title>Prolyl hydroxylase domain protein 2 (PHD2) mediates oxygen-induced retinopathy in neonatal mice.</title>
        <authorList>
            <person name="Duan L.J."/>
            <person name="Takeda K."/>
            <person name="Fong G.H."/>
        </authorList>
    </citation>
    <scope>DISRUPTION PHENOTYPE</scope>
    <scope>FUNCTION</scope>
</reference>
<proteinExistence type="evidence at protein level"/>
<organism>
    <name type="scientific">Mus musculus</name>
    <name type="common">Mouse</name>
    <dbReference type="NCBI Taxonomy" id="10090"/>
    <lineage>
        <taxon>Eukaryota</taxon>
        <taxon>Metazoa</taxon>
        <taxon>Chordata</taxon>
        <taxon>Craniata</taxon>
        <taxon>Vertebrata</taxon>
        <taxon>Euteleostomi</taxon>
        <taxon>Mammalia</taxon>
        <taxon>Eutheria</taxon>
        <taxon>Euarchontoglires</taxon>
        <taxon>Glires</taxon>
        <taxon>Rodentia</taxon>
        <taxon>Myomorpha</taxon>
        <taxon>Muroidea</taxon>
        <taxon>Muridae</taxon>
        <taxon>Murinae</taxon>
        <taxon>Mus</taxon>
        <taxon>Mus</taxon>
    </lineage>
</organism>
<dbReference type="EC" id="1.14.11.29" evidence="1"/>
<dbReference type="EMBL" id="AL672234">
    <property type="status" value="NOT_ANNOTATED_CDS"/>
    <property type="molecule type" value="Genomic_DNA"/>
</dbReference>
<dbReference type="EMBL" id="AJ310546">
    <property type="protein sequence ID" value="CAC42515.1"/>
    <property type="molecule type" value="mRNA"/>
</dbReference>
<dbReference type="EMBL" id="AF453878">
    <property type="protein sequence ID" value="AAL65165.1"/>
    <property type="molecule type" value="mRNA"/>
</dbReference>
<dbReference type="EMBL" id="BC006903">
    <property type="protein sequence ID" value="AAH06903.1"/>
    <property type="status" value="ALT_INIT"/>
    <property type="molecule type" value="mRNA"/>
</dbReference>
<dbReference type="CCDS" id="CCDS52706.1"/>
<dbReference type="RefSeq" id="NP_444437.2">
    <property type="nucleotide sequence ID" value="NM_053207.3"/>
</dbReference>
<dbReference type="SMR" id="Q91YE3"/>
<dbReference type="BioGRID" id="227481">
    <property type="interactions" value="8"/>
</dbReference>
<dbReference type="FunCoup" id="Q91YE3">
    <property type="interactions" value="1855"/>
</dbReference>
<dbReference type="STRING" id="10090.ENSMUSP00000034469"/>
<dbReference type="GlyGen" id="Q91YE3">
    <property type="glycosylation" value="2 sites, 1 N-linked glycan (1 site), 1 O-linked glycan (1 site)"/>
</dbReference>
<dbReference type="iPTMnet" id="Q91YE3"/>
<dbReference type="PhosphoSitePlus" id="Q91YE3"/>
<dbReference type="jPOST" id="Q91YE3"/>
<dbReference type="PaxDb" id="10090-ENSMUSP00000034469"/>
<dbReference type="PeptideAtlas" id="Q91YE3"/>
<dbReference type="ProteomicsDB" id="277564"/>
<dbReference type="Pumba" id="Q91YE3"/>
<dbReference type="DNASU" id="112405"/>
<dbReference type="Ensembl" id="ENSMUST00000034469.7">
    <property type="protein sequence ID" value="ENSMUSP00000034469.6"/>
    <property type="gene ID" value="ENSMUSG00000031987.7"/>
</dbReference>
<dbReference type="GeneID" id="112405"/>
<dbReference type="KEGG" id="mmu:112405"/>
<dbReference type="UCSC" id="uc012gna.1">
    <property type="organism name" value="mouse"/>
</dbReference>
<dbReference type="AGR" id="MGI:1932286"/>
<dbReference type="CTD" id="54583"/>
<dbReference type="MGI" id="MGI:1932286">
    <property type="gene designation" value="Egln1"/>
</dbReference>
<dbReference type="VEuPathDB" id="HostDB:ENSMUSG00000031987"/>
<dbReference type="eggNOG" id="KOG3710">
    <property type="taxonomic scope" value="Eukaryota"/>
</dbReference>
<dbReference type="GeneTree" id="ENSGT00940000155704"/>
<dbReference type="HOGENOM" id="CLU_022206_2_2_1"/>
<dbReference type="InParanoid" id="Q91YE3"/>
<dbReference type="OMA" id="DEKANLY"/>
<dbReference type="OrthoDB" id="76265at2759"/>
<dbReference type="PhylomeDB" id="Q91YE3"/>
<dbReference type="TreeFam" id="TF314595"/>
<dbReference type="BRENDA" id="1.14.11.29">
    <property type="organism ID" value="3474"/>
</dbReference>
<dbReference type="Reactome" id="R-MMU-1234176">
    <property type="pathway name" value="Oxygen-dependent proline hydroxylation of Hypoxia-inducible Factor Alpha"/>
</dbReference>
<dbReference type="BioGRID-ORCS" id="112405">
    <property type="hits" value="18 hits in 78 CRISPR screens"/>
</dbReference>
<dbReference type="ChiTaRS" id="Egln1">
    <property type="organism name" value="mouse"/>
</dbReference>
<dbReference type="PRO" id="PR:Q91YE3"/>
<dbReference type="Proteomes" id="UP000000589">
    <property type="component" value="Chromosome 8"/>
</dbReference>
<dbReference type="RNAct" id="Q91YE3">
    <property type="molecule type" value="protein"/>
</dbReference>
<dbReference type="Bgee" id="ENSMUSG00000031987">
    <property type="expression patterns" value="Expressed in myocardium of ventricle and 261 other cell types or tissues"/>
</dbReference>
<dbReference type="GO" id="GO:0005829">
    <property type="term" value="C:cytosol"/>
    <property type="evidence" value="ECO:0007669"/>
    <property type="project" value="Ensembl"/>
</dbReference>
<dbReference type="GO" id="GO:0098978">
    <property type="term" value="C:glutamatergic synapse"/>
    <property type="evidence" value="ECO:0000314"/>
    <property type="project" value="SynGO"/>
</dbReference>
<dbReference type="GO" id="GO:0005634">
    <property type="term" value="C:nucleus"/>
    <property type="evidence" value="ECO:0007669"/>
    <property type="project" value="UniProtKB-SubCell"/>
</dbReference>
<dbReference type="GO" id="GO:0014069">
    <property type="term" value="C:postsynaptic density"/>
    <property type="evidence" value="ECO:0000314"/>
    <property type="project" value="SynGO"/>
</dbReference>
<dbReference type="GO" id="GO:0016706">
    <property type="term" value="F:2-oxoglutarate-dependent dioxygenase activity"/>
    <property type="evidence" value="ECO:0000266"/>
    <property type="project" value="MGI"/>
</dbReference>
<dbReference type="GO" id="GO:0008198">
    <property type="term" value="F:ferrous iron binding"/>
    <property type="evidence" value="ECO:0000250"/>
    <property type="project" value="UniProtKB"/>
</dbReference>
<dbReference type="GO" id="GO:0160082">
    <property type="term" value="F:hypoxia-inducible factor-proline dioxygenase activity"/>
    <property type="evidence" value="ECO:0007669"/>
    <property type="project" value="UniProtKB-EC"/>
</dbReference>
<dbReference type="GO" id="GO:0031418">
    <property type="term" value="F:L-ascorbic acid binding"/>
    <property type="evidence" value="ECO:0007669"/>
    <property type="project" value="UniProtKB-KW"/>
</dbReference>
<dbReference type="GO" id="GO:0008270">
    <property type="term" value="F:zinc ion binding"/>
    <property type="evidence" value="ECO:0007669"/>
    <property type="project" value="UniProtKB-KW"/>
</dbReference>
<dbReference type="GO" id="GO:0055008">
    <property type="term" value="P:cardiac muscle tissue morphogenesis"/>
    <property type="evidence" value="ECO:0000315"/>
    <property type="project" value="MGI"/>
</dbReference>
<dbReference type="GO" id="GO:0060347">
    <property type="term" value="P:heart trabecula formation"/>
    <property type="evidence" value="ECO:0000315"/>
    <property type="project" value="MGI"/>
</dbReference>
<dbReference type="GO" id="GO:0006879">
    <property type="term" value="P:intracellular iron ion homeostasis"/>
    <property type="evidence" value="ECO:0000315"/>
    <property type="project" value="ParkinsonsUK-UCL"/>
</dbReference>
<dbReference type="GO" id="GO:0032364">
    <property type="term" value="P:intracellular oxygen homeostasis"/>
    <property type="evidence" value="ECO:0007669"/>
    <property type="project" value="Ensembl"/>
</dbReference>
<dbReference type="GO" id="GO:0060711">
    <property type="term" value="P:labyrinthine layer development"/>
    <property type="evidence" value="ECO:0000315"/>
    <property type="project" value="MGI"/>
</dbReference>
<dbReference type="GO" id="GO:1902072">
    <property type="term" value="P:negative regulation of hypoxia-inducible factor-1alpha signaling pathway"/>
    <property type="evidence" value="ECO:0007669"/>
    <property type="project" value="Ensembl"/>
</dbReference>
<dbReference type="GO" id="GO:0045944">
    <property type="term" value="P:positive regulation of transcription by RNA polymerase II"/>
    <property type="evidence" value="ECO:0000315"/>
    <property type="project" value="ParkinsonsUK-UCL"/>
</dbReference>
<dbReference type="GO" id="GO:0045765">
    <property type="term" value="P:regulation of angiogenesis"/>
    <property type="evidence" value="ECO:0000315"/>
    <property type="project" value="UniProtKB"/>
</dbReference>
<dbReference type="GO" id="GO:0099159">
    <property type="term" value="P:regulation of modification of postsynaptic structure"/>
    <property type="evidence" value="ECO:0000314"/>
    <property type="project" value="SynGO"/>
</dbReference>
<dbReference type="GO" id="GO:0140252">
    <property type="term" value="P:regulation protein catabolic process at postsynapse"/>
    <property type="evidence" value="ECO:0000314"/>
    <property type="project" value="SynGO"/>
</dbReference>
<dbReference type="GO" id="GO:0001666">
    <property type="term" value="P:response to hypoxia"/>
    <property type="evidence" value="ECO:0007669"/>
    <property type="project" value="Ensembl"/>
</dbReference>
<dbReference type="GO" id="GO:0071731">
    <property type="term" value="P:response to nitric oxide"/>
    <property type="evidence" value="ECO:0000250"/>
    <property type="project" value="UniProtKB"/>
</dbReference>
<dbReference type="GO" id="GO:0060412">
    <property type="term" value="P:ventricular septum morphogenesis"/>
    <property type="evidence" value="ECO:0000315"/>
    <property type="project" value="MGI"/>
</dbReference>
<dbReference type="FunFam" id="2.60.120.620:FF:000005">
    <property type="entry name" value="Egl nine homolog 1"/>
    <property type="match status" value="1"/>
</dbReference>
<dbReference type="Gene3D" id="6.10.140.2220">
    <property type="match status" value="1"/>
</dbReference>
<dbReference type="Gene3D" id="2.60.120.620">
    <property type="entry name" value="q2cbj1_9rhob like domain"/>
    <property type="match status" value="1"/>
</dbReference>
<dbReference type="InterPro" id="IPR051559">
    <property type="entry name" value="HIF_prolyl_hydroxylases"/>
</dbReference>
<dbReference type="InterPro" id="IPR005123">
    <property type="entry name" value="Oxoglu/Fe-dep_dioxygenase_dom"/>
</dbReference>
<dbReference type="InterPro" id="IPR006620">
    <property type="entry name" value="Pro_4_hyd_alph"/>
</dbReference>
<dbReference type="InterPro" id="IPR044862">
    <property type="entry name" value="Pro_4_hyd_alph_FE2OG_OXY"/>
</dbReference>
<dbReference type="InterPro" id="IPR002893">
    <property type="entry name" value="Znf_MYND"/>
</dbReference>
<dbReference type="PANTHER" id="PTHR12907:SF4">
    <property type="entry name" value="EGL NINE HOMOLOG 1"/>
    <property type="match status" value="1"/>
</dbReference>
<dbReference type="PANTHER" id="PTHR12907">
    <property type="entry name" value="EGL NINE HOMOLOG-RELATED"/>
    <property type="match status" value="1"/>
</dbReference>
<dbReference type="Pfam" id="PF13640">
    <property type="entry name" value="2OG-FeII_Oxy_3"/>
    <property type="match status" value="1"/>
</dbReference>
<dbReference type="Pfam" id="PF01753">
    <property type="entry name" value="zf-MYND"/>
    <property type="match status" value="1"/>
</dbReference>
<dbReference type="SMART" id="SM00702">
    <property type="entry name" value="P4Hc"/>
    <property type="match status" value="1"/>
</dbReference>
<dbReference type="SUPFAM" id="SSF144232">
    <property type="entry name" value="HIT/MYND zinc finger-like"/>
    <property type="match status" value="1"/>
</dbReference>
<dbReference type="PROSITE" id="PS51471">
    <property type="entry name" value="FE2OG_OXY"/>
    <property type="match status" value="1"/>
</dbReference>
<dbReference type="PROSITE" id="PS01360">
    <property type="entry name" value="ZF_MYND_1"/>
    <property type="match status" value="1"/>
</dbReference>
<dbReference type="PROSITE" id="PS50865">
    <property type="entry name" value="ZF_MYND_2"/>
    <property type="match status" value="1"/>
</dbReference>
<name>EGLN1_MOUSE</name>
<protein>
    <recommendedName>
        <fullName>Egl nine homolog 1</fullName>
        <ecNumber evidence="1">1.14.11.29</ecNumber>
    </recommendedName>
    <alternativeName>
        <fullName>Hypoxia-inducible factor prolyl hydroxylase 2</fullName>
        <shortName>HIF-PH2</shortName>
        <shortName>HIF-prolyl hydroxylase 2</shortName>
        <shortName>HPH-2</shortName>
    </alternativeName>
    <alternativeName>
        <fullName>Prolyl hydroxylase domain-containing protein 2</fullName>
        <shortName>PHD2</shortName>
    </alternativeName>
    <alternativeName>
        <fullName>SM-20</fullName>
    </alternativeName>
</protein>
<feature type="initiator methionine" description="Removed" evidence="1">
    <location>
        <position position="1"/>
    </location>
</feature>
<feature type="chain" id="PRO_0000206662" description="Egl nine homolog 1">
    <location>
        <begin position="2"/>
        <end position="400"/>
    </location>
</feature>
<feature type="domain" description="Fe2OG dioxygenase" evidence="3">
    <location>
        <begin position="271"/>
        <end position="369"/>
    </location>
</feature>
<feature type="zinc finger region" description="MYND-type; atypical" evidence="2">
    <location>
        <begin position="21"/>
        <end position="58"/>
    </location>
</feature>
<feature type="region of interest" description="Required for nuclear export">
    <location>
        <begin position="6"/>
        <end position="20"/>
    </location>
</feature>
<feature type="region of interest" description="Disordered" evidence="4">
    <location>
        <begin position="62"/>
        <end position="161"/>
    </location>
</feature>
<feature type="region of interest" description="Beta(2)beta(3) 'finger-like' loop" evidence="1">
    <location>
        <begin position="218"/>
        <end position="228"/>
    </location>
</feature>
<feature type="compositionally biased region" description="Low complexity" evidence="4">
    <location>
        <begin position="62"/>
        <end position="74"/>
    </location>
</feature>
<feature type="compositionally biased region" description="Gly residues" evidence="4">
    <location>
        <begin position="142"/>
        <end position="157"/>
    </location>
</feature>
<feature type="binding site" evidence="2">
    <location>
        <position position="21"/>
    </location>
    <ligand>
        <name>Zn(2+)</name>
        <dbReference type="ChEBI" id="CHEBI:29105"/>
        <label>1</label>
    </ligand>
</feature>
<feature type="binding site" evidence="2">
    <location>
        <position position="24"/>
    </location>
    <ligand>
        <name>Zn(2+)</name>
        <dbReference type="ChEBI" id="CHEBI:29105"/>
        <label>1</label>
    </ligand>
</feature>
<feature type="binding site" evidence="2">
    <location>
        <position position="33"/>
    </location>
    <ligand>
        <name>Zn(2+)</name>
        <dbReference type="ChEBI" id="CHEBI:29105"/>
        <label>2</label>
    </ligand>
</feature>
<feature type="binding site" evidence="2">
    <location>
        <position position="36"/>
    </location>
    <ligand>
        <name>Zn(2+)</name>
        <dbReference type="ChEBI" id="CHEBI:29105"/>
        <label>2</label>
    </ligand>
</feature>
<feature type="binding site" evidence="2">
    <location>
        <position position="42"/>
    </location>
    <ligand>
        <name>Zn(2+)</name>
        <dbReference type="ChEBI" id="CHEBI:29105"/>
        <label>1</label>
    </ligand>
</feature>
<feature type="binding site" evidence="2">
    <location>
        <position position="46"/>
    </location>
    <ligand>
        <name>Zn(2+)</name>
        <dbReference type="ChEBI" id="CHEBI:29105"/>
        <label>1</label>
    </ligand>
</feature>
<feature type="binding site" evidence="2">
    <location>
        <position position="54"/>
    </location>
    <ligand>
        <name>Zn(2+)</name>
        <dbReference type="ChEBI" id="CHEBI:29105"/>
        <label>2</label>
    </ligand>
</feature>
<feature type="binding site" evidence="2">
    <location>
        <position position="58"/>
    </location>
    <ligand>
        <name>Zn(2+)</name>
        <dbReference type="ChEBI" id="CHEBI:29105"/>
        <label>2</label>
    </ligand>
</feature>
<feature type="binding site" evidence="1 3">
    <location>
        <position position="290"/>
    </location>
    <ligand>
        <name>Fe cation</name>
        <dbReference type="ChEBI" id="CHEBI:24875"/>
    </ligand>
</feature>
<feature type="binding site" evidence="1 3">
    <location>
        <position position="292"/>
    </location>
    <ligand>
        <name>Fe cation</name>
        <dbReference type="ChEBI" id="CHEBI:24875"/>
    </ligand>
</feature>
<feature type="binding site" evidence="1 3">
    <location>
        <position position="351"/>
    </location>
    <ligand>
        <name>Fe cation</name>
        <dbReference type="ChEBI" id="CHEBI:24875"/>
    </ligand>
</feature>
<feature type="binding site" evidence="3">
    <location>
        <position position="360"/>
    </location>
    <ligand>
        <name>2-oxoglutarate</name>
        <dbReference type="ChEBI" id="CHEBI:16810"/>
    </ligand>
</feature>
<feature type="modified residue" description="N-acetylalanine" evidence="1">
    <location>
        <position position="2"/>
    </location>
</feature>
<feature type="modified residue" description="Phosphoserine" evidence="1">
    <location>
        <position position="12"/>
    </location>
</feature>
<feature type="modified residue" description="Phosphoserine" evidence="1">
    <location>
        <position position="114"/>
    </location>
</feature>
<feature type="modified residue" description="S-nitrosocysteine" evidence="1">
    <location>
        <position position="178"/>
    </location>
</feature>
<feature type="modified residue" description="S-nitrosocysteine" evidence="1">
    <location>
        <position position="185"/>
    </location>
</feature>
<feature type="modified residue" description="S-nitrosocysteine" evidence="1">
    <location>
        <position position="279"/>
    </location>
</feature>
<feature type="modified residue" description="S-nitrosocysteine" evidence="1">
    <location>
        <position position="300"/>
    </location>
</feature>
<feature type="modified residue" description="S-nitrosocysteine" evidence="1">
    <location>
        <position position="303"/>
    </location>
</feature>
<feature type="sequence conflict" description="In Ref. 3; AAL65165." evidence="10" ref="3">
    <original>ALHDT</original>
    <variation>RIRHE</variation>
    <location>
        <begin position="205"/>
        <end position="209"/>
    </location>
</feature>
<comment type="function">
    <text evidence="7 8 9">Cellular oxygen sensor that catalyzes, under normoxic conditions, the post-translational formation of 4-hydroxyproline in hypoxia-inducible factor (HIF) alpha proteins. Hydroxylates a specific proline found in each of the oxygen-dependent degradation (ODD) domains (N-terminal, NODD, and C-terminal, CODD) of HIF1A. Also hydroxylates HIF2A. Has a preference for the CODD site for both HIF1A and HIF1B. Hydroxylated HIFs are then targeted for proteasomal degradation via the von Hippel-Lindau ubiquitination complex. Under hypoxic conditions, the hydroxylation reaction is attenuated allowing HIFs to escape degradation resulting in their translocation to the nucleus, heterodimerization with HIF1B, and increased expression of hypoxy-inducible genes. EGLN1 is the most important isozyme under normoxia and, through regulating the stability of HIF1, involved in various hypoxia-influenced processes such as angiogenesis in retinal and cardiac functionality. Target proteins are preferentially recognized via a LXXLAP motif.</text>
</comment>
<comment type="catalytic activity">
    <reaction evidence="1">
        <text>L-prolyl-[hypoxia-inducible factor alpha subunit] + 2-oxoglutarate + O2 = trans-4-hydroxy-L-prolyl-[hypoxia-inducible factor alpha subunit] + succinate + CO2</text>
        <dbReference type="Rhea" id="RHEA:48400"/>
        <dbReference type="Rhea" id="RHEA-COMP:12093"/>
        <dbReference type="Rhea" id="RHEA-COMP:12094"/>
        <dbReference type="ChEBI" id="CHEBI:15379"/>
        <dbReference type="ChEBI" id="CHEBI:16526"/>
        <dbReference type="ChEBI" id="CHEBI:16810"/>
        <dbReference type="ChEBI" id="CHEBI:30031"/>
        <dbReference type="ChEBI" id="CHEBI:50342"/>
        <dbReference type="ChEBI" id="CHEBI:61965"/>
        <dbReference type="EC" id="1.14.11.29"/>
    </reaction>
</comment>
<comment type="cofactor">
    <cofactor evidence="1 3">
        <name>Fe(2+)</name>
        <dbReference type="ChEBI" id="CHEBI:29033"/>
    </cofactor>
    <text evidence="1 3">Binds 1 Fe(2+) ion per subunit.</text>
</comment>
<comment type="cofactor">
    <cofactor evidence="1">
        <name>L-ascorbate</name>
        <dbReference type="ChEBI" id="CHEBI:38290"/>
    </cofactor>
</comment>
<comment type="subunit">
    <text evidence="1">Monomer. Interacts with ING4; the interaction inhibits the hydroxylation of HIF alpha proteins. Interacts with PTGES3 (via PXLE motif); thereby recruiting EGLN1 to the HSP90 pathway to facilitate HIF alpha proteins hydroxylation. Interacts with LIMD1. Found in a complex composed of LIMD1, VHL, EGLN1/PHD2, ELOB and CUL2. Interacts with EPAS1. Interacts with CBFA2T3 and HIF1A.</text>
</comment>
<comment type="subcellular location">
    <subcellularLocation>
        <location evidence="1">Cytoplasm</location>
    </subcellularLocation>
    <subcellularLocation>
        <location evidence="1">Nucleus</location>
    </subcellularLocation>
    <text evidence="1">Mainly cytoplasmic. Shuttles between the nucleus and cytoplasm. Nuclear export requires functional XPO1.</text>
</comment>
<comment type="tissue specificity">
    <text evidence="6">Expressed in heart, brain liver, skeletal muscle and kidney. Low levels were detected in the lung. Constitutively expressed during differentiation of C2C12 skeletal myocytes.</text>
</comment>
<comment type="induction">
    <text evidence="5">Induced by growth factors in cultured vascular smooth muscle. Up-regulated in proliferating myoblasts induced to form differentiated myotubes.</text>
</comment>
<comment type="domain">
    <text evidence="1">The beta(2)beta(3) 'finger-like' loop domain is important for substrate (HIFs' CODD/NODD) selectivity.</text>
</comment>
<comment type="PTM">
    <text evidence="1">S-nitrosylation inhibits the enzyme activity up to 60% under aerobic conditions. Chelation of Fe(2+) has no effect on the S-nitrosylation. It is uncertain whether nitrosylation occurs on Cys-300 or Cys-303.</text>
</comment>
<comment type="disruption phenotype">
    <text evidence="7 8 9">Null mice are smaller than wild type and are erythematous with some animals having evidence of retroperitoneal hemorrhage. The resulting polycythemia can cause thrombosis and cardiac failure and animals die off after 10 weeks. Erythropoietin levels are increased in kidneys but not in livers. In neonatal null mice exposed to 75% oxygen, there are high levels of HIF1A nuclear abundance in retinal tissues accompanied by well-preserved retinal microvessels compared to wild type where oxygen-treated retinas exhibit reverse effects with increased risks of retinopathy.</text>
</comment>
<comment type="sequence caution" evidence="10">
    <conflict type="erroneous initiation">
        <sequence resource="EMBL-CDS" id="AAH06903"/>
    </conflict>
    <text>Truncated N-terminus.</text>
</comment>
<accession>Q91YE3</accession>
<accession>Q8VHJ2</accession>
<accession>Q922P3</accession>
<keyword id="KW-0007">Acetylation</keyword>
<keyword id="KW-0963">Cytoplasm</keyword>
<keyword id="KW-0223">Dioxygenase</keyword>
<keyword id="KW-0408">Iron</keyword>
<keyword id="KW-0479">Metal-binding</keyword>
<keyword id="KW-0539">Nucleus</keyword>
<keyword id="KW-0560">Oxidoreductase</keyword>
<keyword id="KW-0597">Phosphoprotein</keyword>
<keyword id="KW-1185">Reference proteome</keyword>
<keyword id="KW-0702">S-nitrosylation</keyword>
<keyword id="KW-0847">Vitamin C</keyword>
<keyword id="KW-0862">Zinc</keyword>
<keyword id="KW-0863">Zinc-finger</keyword>
<evidence type="ECO:0000250" key="1">
    <source>
        <dbReference type="UniProtKB" id="Q9GZT9"/>
    </source>
</evidence>
<evidence type="ECO:0000255" key="2">
    <source>
        <dbReference type="PROSITE-ProRule" id="PRU00134"/>
    </source>
</evidence>
<evidence type="ECO:0000255" key="3">
    <source>
        <dbReference type="PROSITE-ProRule" id="PRU00805"/>
    </source>
</evidence>
<evidence type="ECO:0000256" key="4">
    <source>
        <dbReference type="SAM" id="MobiDB-lite"/>
    </source>
</evidence>
<evidence type="ECO:0000269" key="5">
    <source>
    </source>
</evidence>
<evidence type="ECO:0000269" key="6">
    <source>
    </source>
</evidence>
<evidence type="ECO:0000269" key="7">
    <source>
    </source>
</evidence>
<evidence type="ECO:0000269" key="8">
    <source>
    </source>
</evidence>
<evidence type="ECO:0000269" key="9">
    <source>
    </source>
</evidence>
<evidence type="ECO:0000305" key="10"/>
<sequence>MASDSGGPGVLSASERDRQYCELCGKMENLLRCGRCRSSFYCCKEHQRQDWKKHKLVCQGGEAPRAQPAPAQPRVAPPPGGAPGAARAGGAARRGDSAAASRVPGPEDAAQARSGPGPAEPGSEDPPLSRSPGPERASLCPAGGGPGEALSPGGGLRPNGQTKPLPALKLALEYIVPCMNKHGICVVDDFLGRETGQQIGDEVRALHDTGKFTDGQLVSQKSDSSKDIRGDQITWIEGKEPGCETIGLLMSSMDDLIRHCSGKLGNYRINGRTKAMVACYPGNGTGYVRHVDNPNGDGRCVTCIYYLNKDWDAKVSGGILRIFPEGKAQFADIEPKFDRLLFFWSDRRNPHEVQPAYATRYAITVWYFDADERARAKVKYLTGEKGVRVELKPNSVSKDV</sequence>
<gene>
    <name type="primary">Egln1</name>
</gene>